<sequence>MAVNLYDYANQLEQALRDSDEYKAIKDAFAKVKENEESKKLFDEFRETQMSFQQKQMQGEEIPEEDLQKAQEQAQAIEKDENISELMNAEQKMSQVFQEINQIIVKPLDEIYAD</sequence>
<dbReference type="EMBL" id="CP000029">
    <property type="protein sequence ID" value="AAW54766.1"/>
    <property type="molecule type" value="Genomic_DNA"/>
</dbReference>
<dbReference type="RefSeq" id="WP_001829805.1">
    <property type="nucleotide sequence ID" value="NC_002976.3"/>
</dbReference>
<dbReference type="SMR" id="Q5HN91"/>
<dbReference type="STRING" id="176279.SERP1381"/>
<dbReference type="KEGG" id="ser:SERP1381"/>
<dbReference type="eggNOG" id="COG3679">
    <property type="taxonomic scope" value="Bacteria"/>
</dbReference>
<dbReference type="HOGENOM" id="CLU_140243_3_0_9"/>
<dbReference type="Proteomes" id="UP000000531">
    <property type="component" value="Chromosome"/>
</dbReference>
<dbReference type="Gene3D" id="1.20.1500.10">
    <property type="entry name" value="YheA/YmcA-like"/>
    <property type="match status" value="1"/>
</dbReference>
<dbReference type="HAMAP" id="MF_01526">
    <property type="entry name" value="UPF0342"/>
    <property type="match status" value="1"/>
</dbReference>
<dbReference type="InterPro" id="IPR010368">
    <property type="entry name" value="Com_YlbF"/>
</dbReference>
<dbReference type="InterPro" id="IPR023378">
    <property type="entry name" value="YheA/YmcA-like_dom_sf"/>
</dbReference>
<dbReference type="NCBIfam" id="NF010212">
    <property type="entry name" value="PRK13676.1-5"/>
    <property type="match status" value="1"/>
</dbReference>
<dbReference type="Pfam" id="PF06133">
    <property type="entry name" value="Com_YlbF"/>
    <property type="match status" value="1"/>
</dbReference>
<dbReference type="SUPFAM" id="SSF158622">
    <property type="entry name" value="YheA/YmcA-like"/>
    <property type="match status" value="1"/>
</dbReference>
<evidence type="ECO:0000255" key="1">
    <source>
        <dbReference type="HAMAP-Rule" id="MF_01526"/>
    </source>
</evidence>
<reference key="1">
    <citation type="journal article" date="2005" name="J. Bacteriol.">
        <title>Insights on evolution of virulence and resistance from the complete genome analysis of an early methicillin-resistant Staphylococcus aureus strain and a biofilm-producing methicillin-resistant Staphylococcus epidermidis strain.</title>
        <authorList>
            <person name="Gill S.R."/>
            <person name="Fouts D.E."/>
            <person name="Archer G.L."/>
            <person name="Mongodin E.F."/>
            <person name="DeBoy R.T."/>
            <person name="Ravel J."/>
            <person name="Paulsen I.T."/>
            <person name="Kolonay J.F."/>
            <person name="Brinkac L.M."/>
            <person name="Beanan M.J."/>
            <person name="Dodson R.J."/>
            <person name="Daugherty S.C."/>
            <person name="Madupu R."/>
            <person name="Angiuoli S.V."/>
            <person name="Durkin A.S."/>
            <person name="Haft D.H."/>
            <person name="Vamathevan J.J."/>
            <person name="Khouri H."/>
            <person name="Utterback T.R."/>
            <person name="Lee C."/>
            <person name="Dimitrov G."/>
            <person name="Jiang L."/>
            <person name="Qin H."/>
            <person name="Weidman J."/>
            <person name="Tran K."/>
            <person name="Kang K.H."/>
            <person name="Hance I.R."/>
            <person name="Nelson K.E."/>
            <person name="Fraser C.M."/>
        </authorList>
    </citation>
    <scope>NUCLEOTIDE SEQUENCE [LARGE SCALE GENOMIC DNA]</scope>
    <source>
        <strain>ATCC 35984 / DSM 28319 / BCRC 17069 / CCUG 31568 / BM 3577 / RP62A</strain>
    </source>
</reference>
<feature type="chain" id="PRO_0000109990" description="UPF0342 protein SERP1381">
    <location>
        <begin position="1"/>
        <end position="114"/>
    </location>
</feature>
<organism>
    <name type="scientific">Staphylococcus epidermidis (strain ATCC 35984 / DSM 28319 / BCRC 17069 / CCUG 31568 / BM 3577 / RP62A)</name>
    <dbReference type="NCBI Taxonomy" id="176279"/>
    <lineage>
        <taxon>Bacteria</taxon>
        <taxon>Bacillati</taxon>
        <taxon>Bacillota</taxon>
        <taxon>Bacilli</taxon>
        <taxon>Bacillales</taxon>
        <taxon>Staphylococcaceae</taxon>
        <taxon>Staphylococcus</taxon>
    </lineage>
</organism>
<proteinExistence type="inferred from homology"/>
<protein>
    <recommendedName>
        <fullName evidence="1">UPF0342 protein SERP1381</fullName>
    </recommendedName>
</protein>
<accession>Q5HN91</accession>
<name>Y1381_STAEQ</name>
<comment type="similarity">
    <text evidence="1">Belongs to the UPF0342 family.</text>
</comment>
<gene>
    <name type="ordered locus">SERP1381</name>
</gene>
<keyword id="KW-1185">Reference proteome</keyword>